<organism>
    <name type="scientific">Lettuce big-vein associated virus (isolate Japan/Kagawa)</name>
    <name type="common">LBVaV</name>
    <dbReference type="NCBI Taxonomy" id="652962"/>
    <lineage>
        <taxon>Viruses</taxon>
        <taxon>Riboviria</taxon>
        <taxon>Orthornavirae</taxon>
        <taxon>Negarnaviricota</taxon>
        <taxon>Haploviricotina</taxon>
        <taxon>Monjiviricetes</taxon>
        <taxon>Mononegavirales</taxon>
        <taxon>Rhabdoviridae</taxon>
        <taxon>Betarhabdovirinae</taxon>
        <taxon>Varicosavirus</taxon>
        <taxon>Varicosavirus lactucae</taxon>
    </lineage>
</organism>
<accession>Q68Y28</accession>
<reference key="1">
    <citation type="journal article" date="2004" name="J. Gen. Virol.">
        <title>Nucleotide sequence of RNA2 of Lettuce big-vein virus and evidence for a possible transcription termination/initiation strategy similar to that of rhabdoviruses.</title>
        <authorList>
            <person name="Sasaya T."/>
            <person name="Kusaba S."/>
            <person name="Ishikawa K."/>
            <person name="Koganezawa H."/>
        </authorList>
    </citation>
    <scope>NUCLEOTIDE SEQUENCE [GENOMIC RNA]</scope>
</reference>
<proteinExistence type="predicted"/>
<sequence length="368" mass="41305">MAERCFEAAMTYMIPNKQSVEVFEGLLGILDPVLTSKHVRRVYQEITVSFLMISLISDQVDSKGIVRMSDSQGDDDDSLSSLTWNSKNKLWGFLVNPVPITSSDLEKRLRISCMISSNAYRIGTNVAQVRFLLRIGTFPLVLSRELGFLCPSSSRFPSVIFVSPDKQTEMLRIISSYYSVGDTEEKNCWGILGERYLTTISEDISNLVVMAFPFLQGAFHCSSVYYLNFGCKMAAEGFHAIAREELRIALSNPVLWSDCPLKRVYDSLLQRIPTGVHISHSEEKGDPTFLPLAEYCSSHRECWICGDLKLGVDRGIGADFRHLSERRTSSPDGLDAVMSAVSRMIYHHWSIPSWVSGAFKIAKFIGAH</sequence>
<feature type="chain" id="PRO_0000391474" description="Protein 5">
    <location>
        <begin position="1"/>
        <end position="368"/>
    </location>
</feature>
<organismHost>
    <name type="scientific">Lactuca sativa</name>
    <name type="common">Garden lettuce</name>
    <dbReference type="NCBI Taxonomy" id="4236"/>
</organismHost>
<organismHost>
    <name type="scientific">Sonchus asper</name>
    <name type="common">Spiny sowthistle</name>
    <name type="synonym">Sonchus oleraceus var. asper</name>
    <dbReference type="NCBI Taxonomy" id="50193"/>
</organismHost>
<organismHost>
    <name type="scientific">Sonchus oleraceus</name>
    <name type="common">Common sowthistle</name>
    <dbReference type="NCBI Taxonomy" id="50207"/>
</organismHost>
<keyword id="KW-1185">Reference proteome</keyword>
<name>VP5_LBVAV</name>
<protein>
    <recommendedName>
        <fullName>Protein 5</fullName>
    </recommendedName>
</protein>
<dbReference type="EMBL" id="AB114138">
    <property type="protein sequence ID" value="BAD36834.1"/>
    <property type="molecule type" value="Genomic_RNA"/>
</dbReference>
<dbReference type="KEGG" id="vg:7042932"/>
<dbReference type="Proteomes" id="UP000008154">
    <property type="component" value="Genome"/>
</dbReference>